<proteinExistence type="inferred from homology"/>
<organism>
    <name type="scientific">Haemophilus influenzae (strain PittGG)</name>
    <dbReference type="NCBI Taxonomy" id="374931"/>
    <lineage>
        <taxon>Bacteria</taxon>
        <taxon>Pseudomonadati</taxon>
        <taxon>Pseudomonadota</taxon>
        <taxon>Gammaproteobacteria</taxon>
        <taxon>Pasteurellales</taxon>
        <taxon>Pasteurellaceae</taxon>
        <taxon>Haemophilus</taxon>
    </lineage>
</organism>
<evidence type="ECO:0000255" key="1">
    <source>
        <dbReference type="HAMAP-Rule" id="MF_01227"/>
    </source>
</evidence>
<keyword id="KW-0067">ATP-binding</keyword>
<keyword id="KW-0315">Glutamine amidotransferase</keyword>
<keyword id="KW-0436">Ligase</keyword>
<keyword id="KW-0460">Magnesium</keyword>
<keyword id="KW-0479">Metal-binding</keyword>
<keyword id="KW-0547">Nucleotide-binding</keyword>
<keyword id="KW-0665">Pyrimidine biosynthesis</keyword>
<comment type="function">
    <text evidence="1">Catalyzes the ATP-dependent amination of UTP to CTP with either L-glutamine or ammonia as the source of nitrogen. Regulates intracellular CTP levels through interactions with the four ribonucleotide triphosphates.</text>
</comment>
<comment type="catalytic activity">
    <reaction evidence="1">
        <text>UTP + L-glutamine + ATP + H2O = CTP + L-glutamate + ADP + phosphate + 2 H(+)</text>
        <dbReference type="Rhea" id="RHEA:26426"/>
        <dbReference type="ChEBI" id="CHEBI:15377"/>
        <dbReference type="ChEBI" id="CHEBI:15378"/>
        <dbReference type="ChEBI" id="CHEBI:29985"/>
        <dbReference type="ChEBI" id="CHEBI:30616"/>
        <dbReference type="ChEBI" id="CHEBI:37563"/>
        <dbReference type="ChEBI" id="CHEBI:43474"/>
        <dbReference type="ChEBI" id="CHEBI:46398"/>
        <dbReference type="ChEBI" id="CHEBI:58359"/>
        <dbReference type="ChEBI" id="CHEBI:456216"/>
        <dbReference type="EC" id="6.3.4.2"/>
    </reaction>
</comment>
<comment type="catalytic activity">
    <reaction evidence="1">
        <text>L-glutamine + H2O = L-glutamate + NH4(+)</text>
        <dbReference type="Rhea" id="RHEA:15889"/>
        <dbReference type="ChEBI" id="CHEBI:15377"/>
        <dbReference type="ChEBI" id="CHEBI:28938"/>
        <dbReference type="ChEBI" id="CHEBI:29985"/>
        <dbReference type="ChEBI" id="CHEBI:58359"/>
    </reaction>
</comment>
<comment type="catalytic activity">
    <reaction evidence="1">
        <text>UTP + NH4(+) + ATP = CTP + ADP + phosphate + 2 H(+)</text>
        <dbReference type="Rhea" id="RHEA:16597"/>
        <dbReference type="ChEBI" id="CHEBI:15378"/>
        <dbReference type="ChEBI" id="CHEBI:28938"/>
        <dbReference type="ChEBI" id="CHEBI:30616"/>
        <dbReference type="ChEBI" id="CHEBI:37563"/>
        <dbReference type="ChEBI" id="CHEBI:43474"/>
        <dbReference type="ChEBI" id="CHEBI:46398"/>
        <dbReference type="ChEBI" id="CHEBI:456216"/>
    </reaction>
</comment>
<comment type="activity regulation">
    <text evidence="1">Allosterically activated by GTP, when glutamine is the substrate; GTP has no effect on the reaction when ammonia is the substrate. The allosteric effector GTP functions by stabilizing the protein conformation that binds the tetrahedral intermediate(s) formed during glutamine hydrolysis. Inhibited by the product CTP, via allosteric rather than competitive inhibition.</text>
</comment>
<comment type="pathway">
    <text evidence="1">Pyrimidine metabolism; CTP biosynthesis via de novo pathway; CTP from UDP: step 2/2.</text>
</comment>
<comment type="subunit">
    <text evidence="1">Homotetramer.</text>
</comment>
<comment type="miscellaneous">
    <text evidence="1">CTPSs have evolved a hybrid strategy for distinguishing between UTP and CTP. The overlapping regions of the product feedback inhibitory and substrate sites recognize a common feature in both compounds, the triphosphate moiety. To differentiate isosteric substrate and product pyrimidine rings, an additional pocket far from the expected kinase/ligase catalytic site, specifically recognizes the cytosine and ribose portions of the product inhibitor.</text>
</comment>
<comment type="similarity">
    <text evidence="1">Belongs to the CTP synthase family.</text>
</comment>
<name>PYRG_HAEIG</name>
<accession>A5UIK2</accession>
<protein>
    <recommendedName>
        <fullName evidence="1">CTP synthase</fullName>
        <ecNumber evidence="1">6.3.4.2</ecNumber>
    </recommendedName>
    <alternativeName>
        <fullName evidence="1">Cytidine 5'-triphosphate synthase</fullName>
    </alternativeName>
    <alternativeName>
        <fullName evidence="1">Cytidine triphosphate synthetase</fullName>
        <shortName evidence="1">CTP synthetase</shortName>
        <shortName evidence="1">CTPS</shortName>
    </alternativeName>
    <alternativeName>
        <fullName evidence="1">UTP--ammonia ligase</fullName>
    </alternativeName>
</protein>
<reference key="1">
    <citation type="journal article" date="2007" name="Genome Biol.">
        <title>Characterization and modeling of the Haemophilus influenzae core and supragenomes based on the complete genomic sequences of Rd and 12 clinical nontypeable strains.</title>
        <authorList>
            <person name="Hogg J.S."/>
            <person name="Hu F.Z."/>
            <person name="Janto B."/>
            <person name="Boissy R."/>
            <person name="Hayes J."/>
            <person name="Keefe R."/>
            <person name="Post J.C."/>
            <person name="Ehrlich G.D."/>
        </authorList>
    </citation>
    <scope>NUCLEOTIDE SEQUENCE [LARGE SCALE GENOMIC DNA]</scope>
    <source>
        <strain>PittGG</strain>
    </source>
</reference>
<dbReference type="EC" id="6.3.4.2" evidence="1"/>
<dbReference type="EMBL" id="CP000672">
    <property type="protein sequence ID" value="ABR00608.1"/>
    <property type="molecule type" value="Genomic_DNA"/>
</dbReference>
<dbReference type="SMR" id="A5UIK2"/>
<dbReference type="MEROPS" id="C26.964"/>
<dbReference type="KEGG" id="hiq:CGSHiGG_09020"/>
<dbReference type="HOGENOM" id="CLU_011675_5_0_6"/>
<dbReference type="UniPathway" id="UPA00159">
    <property type="reaction ID" value="UER00277"/>
</dbReference>
<dbReference type="Proteomes" id="UP000001990">
    <property type="component" value="Chromosome"/>
</dbReference>
<dbReference type="GO" id="GO:0005829">
    <property type="term" value="C:cytosol"/>
    <property type="evidence" value="ECO:0007669"/>
    <property type="project" value="TreeGrafter"/>
</dbReference>
<dbReference type="GO" id="GO:0005524">
    <property type="term" value="F:ATP binding"/>
    <property type="evidence" value="ECO:0007669"/>
    <property type="project" value="UniProtKB-KW"/>
</dbReference>
<dbReference type="GO" id="GO:0003883">
    <property type="term" value="F:CTP synthase activity"/>
    <property type="evidence" value="ECO:0007669"/>
    <property type="project" value="UniProtKB-UniRule"/>
</dbReference>
<dbReference type="GO" id="GO:0004359">
    <property type="term" value="F:glutaminase activity"/>
    <property type="evidence" value="ECO:0007669"/>
    <property type="project" value="RHEA"/>
</dbReference>
<dbReference type="GO" id="GO:0042802">
    <property type="term" value="F:identical protein binding"/>
    <property type="evidence" value="ECO:0007669"/>
    <property type="project" value="TreeGrafter"/>
</dbReference>
<dbReference type="GO" id="GO:0046872">
    <property type="term" value="F:metal ion binding"/>
    <property type="evidence" value="ECO:0007669"/>
    <property type="project" value="UniProtKB-KW"/>
</dbReference>
<dbReference type="GO" id="GO:0044210">
    <property type="term" value="P:'de novo' CTP biosynthetic process"/>
    <property type="evidence" value="ECO:0007669"/>
    <property type="project" value="UniProtKB-UniRule"/>
</dbReference>
<dbReference type="GO" id="GO:0019856">
    <property type="term" value="P:pyrimidine nucleobase biosynthetic process"/>
    <property type="evidence" value="ECO:0007669"/>
    <property type="project" value="TreeGrafter"/>
</dbReference>
<dbReference type="CDD" id="cd03113">
    <property type="entry name" value="CTPS_N"/>
    <property type="match status" value="1"/>
</dbReference>
<dbReference type="CDD" id="cd01746">
    <property type="entry name" value="GATase1_CTP_Synthase"/>
    <property type="match status" value="1"/>
</dbReference>
<dbReference type="FunFam" id="3.40.50.300:FF:000009">
    <property type="entry name" value="CTP synthase"/>
    <property type="match status" value="1"/>
</dbReference>
<dbReference type="FunFam" id="3.40.50.880:FF:000002">
    <property type="entry name" value="CTP synthase"/>
    <property type="match status" value="1"/>
</dbReference>
<dbReference type="Gene3D" id="3.40.50.880">
    <property type="match status" value="1"/>
</dbReference>
<dbReference type="Gene3D" id="3.40.50.300">
    <property type="entry name" value="P-loop containing nucleotide triphosphate hydrolases"/>
    <property type="match status" value="1"/>
</dbReference>
<dbReference type="HAMAP" id="MF_01227">
    <property type="entry name" value="PyrG"/>
    <property type="match status" value="1"/>
</dbReference>
<dbReference type="InterPro" id="IPR029062">
    <property type="entry name" value="Class_I_gatase-like"/>
</dbReference>
<dbReference type="InterPro" id="IPR004468">
    <property type="entry name" value="CTP_synthase"/>
</dbReference>
<dbReference type="InterPro" id="IPR017456">
    <property type="entry name" value="CTP_synthase_N"/>
</dbReference>
<dbReference type="InterPro" id="IPR017926">
    <property type="entry name" value="GATASE"/>
</dbReference>
<dbReference type="InterPro" id="IPR033828">
    <property type="entry name" value="GATase1_CTP_Synthase"/>
</dbReference>
<dbReference type="InterPro" id="IPR027417">
    <property type="entry name" value="P-loop_NTPase"/>
</dbReference>
<dbReference type="NCBIfam" id="NF003792">
    <property type="entry name" value="PRK05380.1"/>
    <property type="match status" value="1"/>
</dbReference>
<dbReference type="NCBIfam" id="TIGR00337">
    <property type="entry name" value="PyrG"/>
    <property type="match status" value="1"/>
</dbReference>
<dbReference type="PANTHER" id="PTHR11550">
    <property type="entry name" value="CTP SYNTHASE"/>
    <property type="match status" value="1"/>
</dbReference>
<dbReference type="PANTHER" id="PTHR11550:SF0">
    <property type="entry name" value="CTP SYNTHASE-RELATED"/>
    <property type="match status" value="1"/>
</dbReference>
<dbReference type="Pfam" id="PF06418">
    <property type="entry name" value="CTP_synth_N"/>
    <property type="match status" value="1"/>
</dbReference>
<dbReference type="Pfam" id="PF00117">
    <property type="entry name" value="GATase"/>
    <property type="match status" value="1"/>
</dbReference>
<dbReference type="SUPFAM" id="SSF52317">
    <property type="entry name" value="Class I glutamine amidotransferase-like"/>
    <property type="match status" value="1"/>
</dbReference>
<dbReference type="SUPFAM" id="SSF52540">
    <property type="entry name" value="P-loop containing nucleoside triphosphate hydrolases"/>
    <property type="match status" value="1"/>
</dbReference>
<dbReference type="PROSITE" id="PS51273">
    <property type="entry name" value="GATASE_TYPE_1"/>
    <property type="match status" value="1"/>
</dbReference>
<feature type="chain" id="PRO_1000139468" description="CTP synthase">
    <location>
        <begin position="1"/>
        <end position="545"/>
    </location>
</feature>
<feature type="domain" description="Glutamine amidotransferase type-1" evidence="1">
    <location>
        <begin position="291"/>
        <end position="542"/>
    </location>
</feature>
<feature type="region of interest" description="Amidoligase domain" evidence="1">
    <location>
        <begin position="1"/>
        <end position="266"/>
    </location>
</feature>
<feature type="active site" description="Nucleophile; for glutamine hydrolysis" evidence="1">
    <location>
        <position position="379"/>
    </location>
</feature>
<feature type="active site" evidence="1">
    <location>
        <position position="515"/>
    </location>
</feature>
<feature type="active site" evidence="1">
    <location>
        <position position="517"/>
    </location>
</feature>
<feature type="binding site" evidence="1">
    <location>
        <position position="14"/>
    </location>
    <ligand>
        <name>CTP</name>
        <dbReference type="ChEBI" id="CHEBI:37563"/>
        <note>allosteric inhibitor</note>
    </ligand>
</feature>
<feature type="binding site" evidence="1">
    <location>
        <position position="14"/>
    </location>
    <ligand>
        <name>UTP</name>
        <dbReference type="ChEBI" id="CHEBI:46398"/>
    </ligand>
</feature>
<feature type="binding site" evidence="1">
    <location>
        <begin position="15"/>
        <end position="20"/>
    </location>
    <ligand>
        <name>ATP</name>
        <dbReference type="ChEBI" id="CHEBI:30616"/>
    </ligand>
</feature>
<feature type="binding site" evidence="1">
    <location>
        <position position="72"/>
    </location>
    <ligand>
        <name>ATP</name>
        <dbReference type="ChEBI" id="CHEBI:30616"/>
    </ligand>
</feature>
<feature type="binding site" evidence="1">
    <location>
        <position position="72"/>
    </location>
    <ligand>
        <name>Mg(2+)</name>
        <dbReference type="ChEBI" id="CHEBI:18420"/>
    </ligand>
</feature>
<feature type="binding site" evidence="1">
    <location>
        <position position="140"/>
    </location>
    <ligand>
        <name>Mg(2+)</name>
        <dbReference type="ChEBI" id="CHEBI:18420"/>
    </ligand>
</feature>
<feature type="binding site" evidence="1">
    <location>
        <begin position="147"/>
        <end position="149"/>
    </location>
    <ligand>
        <name>CTP</name>
        <dbReference type="ChEBI" id="CHEBI:37563"/>
        <note>allosteric inhibitor</note>
    </ligand>
</feature>
<feature type="binding site" evidence="1">
    <location>
        <begin position="187"/>
        <end position="192"/>
    </location>
    <ligand>
        <name>CTP</name>
        <dbReference type="ChEBI" id="CHEBI:37563"/>
        <note>allosteric inhibitor</note>
    </ligand>
</feature>
<feature type="binding site" evidence="1">
    <location>
        <begin position="187"/>
        <end position="192"/>
    </location>
    <ligand>
        <name>UTP</name>
        <dbReference type="ChEBI" id="CHEBI:46398"/>
    </ligand>
</feature>
<feature type="binding site" evidence="1">
    <location>
        <position position="223"/>
    </location>
    <ligand>
        <name>CTP</name>
        <dbReference type="ChEBI" id="CHEBI:37563"/>
        <note>allosteric inhibitor</note>
    </ligand>
</feature>
<feature type="binding site" evidence="1">
    <location>
        <position position="223"/>
    </location>
    <ligand>
        <name>UTP</name>
        <dbReference type="ChEBI" id="CHEBI:46398"/>
    </ligand>
</feature>
<feature type="binding site" evidence="1">
    <location>
        <begin position="239"/>
        <end position="241"/>
    </location>
    <ligand>
        <name>ATP</name>
        <dbReference type="ChEBI" id="CHEBI:30616"/>
    </ligand>
</feature>
<feature type="binding site" evidence="1">
    <location>
        <position position="352"/>
    </location>
    <ligand>
        <name>L-glutamine</name>
        <dbReference type="ChEBI" id="CHEBI:58359"/>
    </ligand>
</feature>
<feature type="binding site" evidence="1">
    <location>
        <begin position="380"/>
        <end position="383"/>
    </location>
    <ligand>
        <name>L-glutamine</name>
        <dbReference type="ChEBI" id="CHEBI:58359"/>
    </ligand>
</feature>
<feature type="binding site" evidence="1">
    <location>
        <position position="403"/>
    </location>
    <ligand>
        <name>L-glutamine</name>
        <dbReference type="ChEBI" id="CHEBI:58359"/>
    </ligand>
</feature>
<feature type="binding site" evidence="1">
    <location>
        <position position="470"/>
    </location>
    <ligand>
        <name>L-glutamine</name>
        <dbReference type="ChEBI" id="CHEBI:58359"/>
    </ligand>
</feature>
<gene>
    <name evidence="1" type="primary">pyrG</name>
    <name type="ordered locus">CGSHiGG_09020</name>
</gene>
<sequence>MATNYIFVTGGVVSSLGKGIAAASLAAILEARGLNVTIMKLDPYINVDPGTMSPTQHGEVFVTQDGAETDLDLGHYERFIRTKMTKRNNFTTGKIYSEVLRKERRGDYLGATIQVIPHITNEIKDRVIAGAQGHDVVIVEVGGTVGDIESLPFLEALRQLAVQVGREHTLFMHLTLVPYIPTAGEVKTKPTQHSVKELLSIGIQPDVLICRSDRMIPPNERAKIALFCNVAERAVISLKDVNSIYQIPALLKSQGLDDFVCERFRLTCPEADLTEWEQVLYKQANPVGEVTIGMVGKYTELPDAYKSVNEALKHAGLTNRLSVNIKYIDSQDVETKGVEVLKGVDGILVPGGFGYRGVEGKIRTAQYARENKIPYLGICLGMQIALIEYARNVAGLTKANSSEFDKDCEQPVVALITEWQDAEGNTEVRTDESDLGGTMRLGAQQCHLVSGSRARELYGKETIEERHRHRYEVNNTLLPQIEKAGLKVTGLSADKKLVEIIEVPNHPWFVACQFHPEFTSTPRDGHPLFAGFVKAAYENHKKSVK</sequence>